<evidence type="ECO:0000250" key="1"/>
<evidence type="ECO:0000255" key="2">
    <source>
        <dbReference type="PROSITE-ProRule" id="PRU01234"/>
    </source>
</evidence>
<evidence type="ECO:0000256" key="3">
    <source>
        <dbReference type="SAM" id="MobiDB-lite"/>
    </source>
</evidence>
<evidence type="ECO:0000305" key="4"/>
<keyword id="KW-0963">Cytoplasm</keyword>
<keyword id="KW-1185">Reference proteome</keyword>
<comment type="function">
    <text evidence="1">May be involved in a process influencing telomere capping.</text>
</comment>
<comment type="subcellular location">
    <subcellularLocation>
        <location evidence="1">Cytoplasm</location>
    </subcellularLocation>
</comment>
<comment type="similarity">
    <text evidence="4">Belongs to the RTC5 family.</text>
</comment>
<accession>A3LQG3</accession>
<organism>
    <name type="scientific">Scheffersomyces stipitis (strain ATCC 58785 / CBS 6054 / NBRC 10063 / NRRL Y-11545)</name>
    <name type="common">Yeast</name>
    <name type="synonym">Pichia stipitis</name>
    <dbReference type="NCBI Taxonomy" id="322104"/>
    <lineage>
        <taxon>Eukaryota</taxon>
        <taxon>Fungi</taxon>
        <taxon>Dikarya</taxon>
        <taxon>Ascomycota</taxon>
        <taxon>Saccharomycotina</taxon>
        <taxon>Pichiomycetes</taxon>
        <taxon>Debaryomycetaceae</taxon>
        <taxon>Scheffersomyces</taxon>
    </lineage>
</organism>
<sequence length="647" mass="73674">MGQIASSANDGKNNAILESFSKEQIMDLLSSRCLTLLRNVEITSITNKLNVTSLREKNVVTPTDLALLLQLSNDMDRDNSSVNESFNRALKILYESTRVIGSLPFLSNYTKTDTSGGLTIQELLISSLVHSARYKKIFNSQYDYLKLIFCSLALPRLAVETNSEESSVDFLSDKPKVVEQVRYPIREEDSPDIRSKKVKWDTFNIINNYDDIDISSLKVNAYDLVQIITLFLIISSIPKMKRDLMHQKLVGYIERWKEFEVYGLYILKYININLNATNLQTETITFEEFQTTFNRCLPNFFQNGFSILFKEGLLSTVVAKAGSNNSSKDIPNNPEPQKQEEEATKKKKFKLPKFEESKLVNAASLSYISNVVSGLGSSIEISNQNLIKLYAGTEAGFSIRSLESKIFKWQAPTLFVVSGKRLKNKTIDTNMRYQQFKTEYPQYFRSSESNKHDWQNDNDKITYAILINQPWKNSNKKNFGDENTIILSLSPRLDFYKSIHSTVLNGESIYFNTLGLGIGFGNTQPVNKNGVKKYFPGDVSLTIEANLEFAVFRHIVASSANTSTYFERSHQSQVRSSDFEDRFMITDLEVWGIGSTKDLEEQRKQWEWEQKQAEARQSVNLRSLGEERAFLEMVGLVGNHNSSGGSI</sequence>
<dbReference type="EMBL" id="CP000496">
    <property type="protein sequence ID" value="ABN64675.2"/>
    <property type="molecule type" value="Genomic_DNA"/>
</dbReference>
<dbReference type="RefSeq" id="XP_001382704.2">
    <property type="nucleotide sequence ID" value="XM_001382667.1"/>
</dbReference>
<dbReference type="SMR" id="A3LQG3"/>
<dbReference type="FunCoup" id="A3LQG3">
    <property type="interactions" value="17"/>
</dbReference>
<dbReference type="STRING" id="322104.A3LQG3"/>
<dbReference type="GeneID" id="4837265"/>
<dbReference type="KEGG" id="pic:PICST_54383"/>
<dbReference type="eggNOG" id="ENOG502QV3R">
    <property type="taxonomic scope" value="Eukaryota"/>
</dbReference>
<dbReference type="HOGENOM" id="CLU_011918_1_0_1"/>
<dbReference type="InParanoid" id="A3LQG3"/>
<dbReference type="OMA" id="KWEFEAR"/>
<dbReference type="OrthoDB" id="289228at2759"/>
<dbReference type="Proteomes" id="UP000002258">
    <property type="component" value="Chromosome 2"/>
</dbReference>
<dbReference type="GO" id="GO:0005737">
    <property type="term" value="C:cytoplasm"/>
    <property type="evidence" value="ECO:0007669"/>
    <property type="project" value="UniProtKB-SubCell"/>
</dbReference>
<dbReference type="InterPro" id="IPR006571">
    <property type="entry name" value="TLDc_dom"/>
</dbReference>
<dbReference type="Pfam" id="PF07534">
    <property type="entry name" value="TLD"/>
    <property type="match status" value="1"/>
</dbReference>
<dbReference type="SMART" id="SM00584">
    <property type="entry name" value="TLDc"/>
    <property type="match status" value="1"/>
</dbReference>
<dbReference type="PROSITE" id="PS51886">
    <property type="entry name" value="TLDC"/>
    <property type="match status" value="1"/>
</dbReference>
<proteinExistence type="inferred from homology"/>
<protein>
    <recommendedName>
        <fullName>Restriction of telomere capping protein 5</fullName>
    </recommendedName>
</protein>
<name>RTC5_PICST</name>
<gene>
    <name type="primary">RTC5</name>
    <name type="synonym">YBV2</name>
    <name type="ORF">PICST_54383</name>
</gene>
<reference key="1">
    <citation type="journal article" date="2007" name="Nat. Biotechnol.">
        <title>Genome sequence of the lignocellulose-bioconverting and xylose-fermenting yeast Pichia stipitis.</title>
        <authorList>
            <person name="Jeffries T.W."/>
            <person name="Grigoriev I.V."/>
            <person name="Grimwood J."/>
            <person name="Laplaza J.M."/>
            <person name="Aerts A."/>
            <person name="Salamov A."/>
            <person name="Schmutz J."/>
            <person name="Lindquist E."/>
            <person name="Dehal P."/>
            <person name="Shapiro H."/>
            <person name="Jin Y.-S."/>
            <person name="Passoth V."/>
            <person name="Richardson P.M."/>
        </authorList>
    </citation>
    <scope>NUCLEOTIDE SEQUENCE [LARGE SCALE GENOMIC DNA]</scope>
    <source>
        <strain>ATCC 58785 / CBS 6054 / NBRC 10063 / NRRL Y-11545</strain>
    </source>
</reference>
<feature type="chain" id="PRO_0000408841" description="Restriction of telomere capping protein 5">
    <location>
        <begin position="1"/>
        <end position="647"/>
    </location>
</feature>
<feature type="domain" description="TLDc" evidence="2">
    <location>
        <begin position="358"/>
        <end position="594"/>
    </location>
</feature>
<feature type="region of interest" description="Disordered" evidence="3">
    <location>
        <begin position="325"/>
        <end position="346"/>
    </location>
</feature>